<feature type="chain" id="PRO_0000112575" description="Acetylglutamate kinase">
    <location>
        <begin position="1"/>
        <end position="298"/>
    </location>
</feature>
<feature type="binding site" evidence="1">
    <location>
        <begin position="64"/>
        <end position="65"/>
    </location>
    <ligand>
        <name>substrate</name>
    </ligand>
</feature>
<feature type="binding site" evidence="1">
    <location>
        <position position="86"/>
    </location>
    <ligand>
        <name>substrate</name>
    </ligand>
</feature>
<feature type="binding site" evidence="1">
    <location>
        <position position="195"/>
    </location>
    <ligand>
        <name>substrate</name>
    </ligand>
</feature>
<feature type="site" description="Transition state stabilizer" evidence="1">
    <location>
        <position position="29"/>
    </location>
</feature>
<feature type="site" description="Transition state stabilizer" evidence="1">
    <location>
        <position position="255"/>
    </location>
</feature>
<name>ARGB_AQUAE</name>
<proteinExistence type="inferred from homology"/>
<protein>
    <recommendedName>
        <fullName evidence="1">Acetylglutamate kinase</fullName>
        <ecNumber evidence="1">2.7.2.8</ecNumber>
    </recommendedName>
    <alternativeName>
        <fullName evidence="1">N-acetyl-L-glutamate 5-phosphotransferase</fullName>
    </alternativeName>
    <alternativeName>
        <fullName evidence="1">NAG kinase</fullName>
        <shortName evidence="1">NAGK</shortName>
    </alternativeName>
</protein>
<dbReference type="EC" id="2.7.2.8" evidence="1"/>
<dbReference type="EMBL" id="AE000657">
    <property type="protein sequence ID" value="AAC07812.1"/>
    <property type="status" value="ALT_FRAME"/>
    <property type="molecule type" value="Genomic_DNA"/>
</dbReference>
<dbReference type="PIR" id="D70477">
    <property type="entry name" value="D70477"/>
</dbReference>
<dbReference type="RefSeq" id="NP_214417.1">
    <property type="nucleotide sequence ID" value="NC_000918.1"/>
</dbReference>
<dbReference type="RefSeq" id="WP_010881353.1">
    <property type="nucleotide sequence ID" value="NC_000918.1"/>
</dbReference>
<dbReference type="SMR" id="O67848"/>
<dbReference type="FunCoup" id="O67848">
    <property type="interactions" value="309"/>
</dbReference>
<dbReference type="STRING" id="224324.aq_2068"/>
<dbReference type="EnsemblBacteria" id="AAC07812">
    <property type="protein sequence ID" value="AAC07812"/>
    <property type="gene ID" value="aq_2068"/>
</dbReference>
<dbReference type="KEGG" id="aae:aq_2068"/>
<dbReference type="PATRIC" id="fig|224324.8.peg.1594"/>
<dbReference type="eggNOG" id="COG0548">
    <property type="taxonomic scope" value="Bacteria"/>
</dbReference>
<dbReference type="HOGENOM" id="CLU_053680_0_0_0"/>
<dbReference type="InParanoid" id="O67848"/>
<dbReference type="OrthoDB" id="9803155at2"/>
<dbReference type="BRENDA" id="3.5.1.108">
    <property type="organism ID" value="396"/>
</dbReference>
<dbReference type="UniPathway" id="UPA00068">
    <property type="reaction ID" value="UER00107"/>
</dbReference>
<dbReference type="Proteomes" id="UP000000798">
    <property type="component" value="Chromosome"/>
</dbReference>
<dbReference type="GO" id="GO:0005737">
    <property type="term" value="C:cytoplasm"/>
    <property type="evidence" value="ECO:0007669"/>
    <property type="project" value="UniProtKB-SubCell"/>
</dbReference>
<dbReference type="GO" id="GO:0003991">
    <property type="term" value="F:acetylglutamate kinase activity"/>
    <property type="evidence" value="ECO:0000318"/>
    <property type="project" value="GO_Central"/>
</dbReference>
<dbReference type="GO" id="GO:0005524">
    <property type="term" value="F:ATP binding"/>
    <property type="evidence" value="ECO:0007669"/>
    <property type="project" value="UniProtKB-UniRule"/>
</dbReference>
<dbReference type="GO" id="GO:0042450">
    <property type="term" value="P:arginine biosynthetic process via ornithine"/>
    <property type="evidence" value="ECO:0007669"/>
    <property type="project" value="UniProtKB-UniRule"/>
</dbReference>
<dbReference type="GO" id="GO:0006526">
    <property type="term" value="P:L-arginine biosynthetic process"/>
    <property type="evidence" value="ECO:0000318"/>
    <property type="project" value="GO_Central"/>
</dbReference>
<dbReference type="CDD" id="cd04250">
    <property type="entry name" value="AAK_NAGK-C"/>
    <property type="match status" value="1"/>
</dbReference>
<dbReference type="FunFam" id="3.40.1160.10:FF:000004">
    <property type="entry name" value="Acetylglutamate kinase"/>
    <property type="match status" value="1"/>
</dbReference>
<dbReference type="Gene3D" id="3.40.1160.10">
    <property type="entry name" value="Acetylglutamate kinase-like"/>
    <property type="match status" value="1"/>
</dbReference>
<dbReference type="HAMAP" id="MF_00082">
    <property type="entry name" value="ArgB"/>
    <property type="match status" value="1"/>
</dbReference>
<dbReference type="InterPro" id="IPR036393">
    <property type="entry name" value="AceGlu_kinase-like_sf"/>
</dbReference>
<dbReference type="InterPro" id="IPR004662">
    <property type="entry name" value="AcgluKinase_fam"/>
</dbReference>
<dbReference type="InterPro" id="IPR037528">
    <property type="entry name" value="ArgB"/>
</dbReference>
<dbReference type="InterPro" id="IPR001048">
    <property type="entry name" value="Asp/Glu/Uridylate_kinase"/>
</dbReference>
<dbReference type="InterPro" id="IPR001057">
    <property type="entry name" value="Glu/AcGlu_kinase"/>
</dbReference>
<dbReference type="InterPro" id="IPR041727">
    <property type="entry name" value="NAGK-C"/>
</dbReference>
<dbReference type="NCBIfam" id="TIGR00761">
    <property type="entry name" value="argB"/>
    <property type="match status" value="1"/>
</dbReference>
<dbReference type="PANTHER" id="PTHR23342">
    <property type="entry name" value="N-ACETYLGLUTAMATE SYNTHASE"/>
    <property type="match status" value="1"/>
</dbReference>
<dbReference type="PANTHER" id="PTHR23342:SF0">
    <property type="entry name" value="N-ACETYLGLUTAMATE SYNTHASE, MITOCHONDRIAL"/>
    <property type="match status" value="1"/>
</dbReference>
<dbReference type="Pfam" id="PF00696">
    <property type="entry name" value="AA_kinase"/>
    <property type="match status" value="1"/>
</dbReference>
<dbReference type="PIRSF" id="PIRSF000728">
    <property type="entry name" value="NAGK"/>
    <property type="match status" value="1"/>
</dbReference>
<dbReference type="PRINTS" id="PR00474">
    <property type="entry name" value="GLU5KINASE"/>
</dbReference>
<dbReference type="SUPFAM" id="SSF53633">
    <property type="entry name" value="Carbamate kinase-like"/>
    <property type="match status" value="1"/>
</dbReference>
<sequence length="298" mass="32908">MNELIEKAKVLQEALPYIREFHGKVFVIKYGGSAMHDEELRESFARDVVLLKYVGINPVIVHGGGPQISKTLEKFGIKPKFVGGMRKTDEETMHVVEMVLSGDINKDIVALINRYSGEKIYAVGLSGRDGRLLKAKKLDKERYFSELGLPVPEEDIGFVGEIVDVNEELIFTLLSHNFIPVIAPVGVGEEGEAYNVNADLAASEIAGEIKAEKLIYLTDTKGVLDEKGELISSLSKDKAEELIKKGVIREGMIPKVRSALRALEKGVKKVHIIDGRVKHSILLEVFTKEGVGTEITLE</sequence>
<organism>
    <name type="scientific">Aquifex aeolicus (strain VF5)</name>
    <dbReference type="NCBI Taxonomy" id="224324"/>
    <lineage>
        <taxon>Bacteria</taxon>
        <taxon>Pseudomonadati</taxon>
        <taxon>Aquificota</taxon>
        <taxon>Aquificia</taxon>
        <taxon>Aquificales</taxon>
        <taxon>Aquificaceae</taxon>
        <taxon>Aquifex</taxon>
    </lineage>
</organism>
<gene>
    <name evidence="1" type="primary">argB</name>
    <name type="ordered locus">aq_2068</name>
</gene>
<comment type="function">
    <text evidence="1">Catalyzes the ATP-dependent phosphorylation of N-acetyl-L-glutamate.</text>
</comment>
<comment type="catalytic activity">
    <reaction evidence="1">
        <text>N-acetyl-L-glutamate + ATP = N-acetyl-L-glutamyl 5-phosphate + ADP</text>
        <dbReference type="Rhea" id="RHEA:14629"/>
        <dbReference type="ChEBI" id="CHEBI:30616"/>
        <dbReference type="ChEBI" id="CHEBI:44337"/>
        <dbReference type="ChEBI" id="CHEBI:57936"/>
        <dbReference type="ChEBI" id="CHEBI:456216"/>
        <dbReference type="EC" id="2.7.2.8"/>
    </reaction>
</comment>
<comment type="pathway">
    <text evidence="1">Amino-acid biosynthesis; L-arginine biosynthesis; N(2)-acetyl-L-ornithine from L-glutamate: step 2/4.</text>
</comment>
<comment type="subcellular location">
    <subcellularLocation>
        <location evidence="1">Cytoplasm</location>
    </subcellularLocation>
</comment>
<comment type="similarity">
    <text evidence="1">Belongs to the acetylglutamate kinase family. ArgB subfamily.</text>
</comment>
<comment type="sequence caution" evidence="2">
    <conflict type="frameshift">
        <sequence resource="EMBL-CDS" id="AAC07812"/>
    </conflict>
</comment>
<reference key="1">
    <citation type="journal article" date="1998" name="Nature">
        <title>The complete genome of the hyperthermophilic bacterium Aquifex aeolicus.</title>
        <authorList>
            <person name="Deckert G."/>
            <person name="Warren P.V."/>
            <person name="Gaasterland T."/>
            <person name="Young W.G."/>
            <person name="Lenox A.L."/>
            <person name="Graham D.E."/>
            <person name="Overbeek R."/>
            <person name="Snead M.A."/>
            <person name="Keller M."/>
            <person name="Aujay M."/>
            <person name="Huber R."/>
            <person name="Feldman R.A."/>
            <person name="Short J.M."/>
            <person name="Olsen G.J."/>
            <person name="Swanson R.V."/>
        </authorList>
    </citation>
    <scope>NUCLEOTIDE SEQUENCE [LARGE SCALE GENOMIC DNA]</scope>
    <source>
        <strain>VF5</strain>
    </source>
</reference>
<accession>O67848</accession>
<evidence type="ECO:0000255" key="1">
    <source>
        <dbReference type="HAMAP-Rule" id="MF_00082"/>
    </source>
</evidence>
<evidence type="ECO:0000305" key="2"/>
<keyword id="KW-0028">Amino-acid biosynthesis</keyword>
<keyword id="KW-0055">Arginine biosynthesis</keyword>
<keyword id="KW-0067">ATP-binding</keyword>
<keyword id="KW-0963">Cytoplasm</keyword>
<keyword id="KW-0418">Kinase</keyword>
<keyword id="KW-0547">Nucleotide-binding</keyword>
<keyword id="KW-1185">Reference proteome</keyword>
<keyword id="KW-0808">Transferase</keyword>